<dbReference type="EC" id="2.1.2.9" evidence="1"/>
<dbReference type="EMBL" id="AP009351">
    <property type="protein sequence ID" value="BAF67398.1"/>
    <property type="molecule type" value="Genomic_DNA"/>
</dbReference>
<dbReference type="RefSeq" id="WP_000161299.1">
    <property type="nucleotide sequence ID" value="NZ_JBBIAE010000001.1"/>
</dbReference>
<dbReference type="SMR" id="A6QGB6"/>
<dbReference type="KEGG" id="sae:NWMN_1126"/>
<dbReference type="HOGENOM" id="CLU_033347_1_1_9"/>
<dbReference type="PHI-base" id="PHI:3999"/>
<dbReference type="Proteomes" id="UP000006386">
    <property type="component" value="Chromosome"/>
</dbReference>
<dbReference type="GO" id="GO:0005829">
    <property type="term" value="C:cytosol"/>
    <property type="evidence" value="ECO:0007669"/>
    <property type="project" value="TreeGrafter"/>
</dbReference>
<dbReference type="GO" id="GO:0004479">
    <property type="term" value="F:methionyl-tRNA formyltransferase activity"/>
    <property type="evidence" value="ECO:0007669"/>
    <property type="project" value="UniProtKB-UniRule"/>
</dbReference>
<dbReference type="CDD" id="cd08646">
    <property type="entry name" value="FMT_core_Met-tRNA-FMT_N"/>
    <property type="match status" value="1"/>
</dbReference>
<dbReference type="CDD" id="cd08704">
    <property type="entry name" value="Met_tRNA_FMT_C"/>
    <property type="match status" value="1"/>
</dbReference>
<dbReference type="FunFam" id="3.40.50.170:FF:000004">
    <property type="entry name" value="Methionyl-tRNA formyltransferase"/>
    <property type="match status" value="1"/>
</dbReference>
<dbReference type="Gene3D" id="3.10.25.10">
    <property type="entry name" value="Formyl transferase, C-terminal domain"/>
    <property type="match status" value="1"/>
</dbReference>
<dbReference type="Gene3D" id="3.40.50.170">
    <property type="entry name" value="Formyl transferase, N-terminal domain"/>
    <property type="match status" value="1"/>
</dbReference>
<dbReference type="HAMAP" id="MF_00182">
    <property type="entry name" value="Formyl_trans"/>
    <property type="match status" value="1"/>
</dbReference>
<dbReference type="InterPro" id="IPR005794">
    <property type="entry name" value="Fmt"/>
</dbReference>
<dbReference type="InterPro" id="IPR005793">
    <property type="entry name" value="Formyl_trans_C"/>
</dbReference>
<dbReference type="InterPro" id="IPR037022">
    <property type="entry name" value="Formyl_trans_C_sf"/>
</dbReference>
<dbReference type="InterPro" id="IPR002376">
    <property type="entry name" value="Formyl_transf_N"/>
</dbReference>
<dbReference type="InterPro" id="IPR036477">
    <property type="entry name" value="Formyl_transf_N_sf"/>
</dbReference>
<dbReference type="InterPro" id="IPR011034">
    <property type="entry name" value="Formyl_transferase-like_C_sf"/>
</dbReference>
<dbReference type="InterPro" id="IPR001555">
    <property type="entry name" value="GART_AS"/>
</dbReference>
<dbReference type="InterPro" id="IPR044135">
    <property type="entry name" value="Met-tRNA-FMT_C"/>
</dbReference>
<dbReference type="InterPro" id="IPR041711">
    <property type="entry name" value="Met-tRNA-FMT_N"/>
</dbReference>
<dbReference type="NCBIfam" id="TIGR00460">
    <property type="entry name" value="fmt"/>
    <property type="match status" value="1"/>
</dbReference>
<dbReference type="PANTHER" id="PTHR11138">
    <property type="entry name" value="METHIONYL-TRNA FORMYLTRANSFERASE"/>
    <property type="match status" value="1"/>
</dbReference>
<dbReference type="PANTHER" id="PTHR11138:SF5">
    <property type="entry name" value="METHIONYL-TRNA FORMYLTRANSFERASE, MITOCHONDRIAL"/>
    <property type="match status" value="1"/>
</dbReference>
<dbReference type="Pfam" id="PF02911">
    <property type="entry name" value="Formyl_trans_C"/>
    <property type="match status" value="1"/>
</dbReference>
<dbReference type="Pfam" id="PF00551">
    <property type="entry name" value="Formyl_trans_N"/>
    <property type="match status" value="1"/>
</dbReference>
<dbReference type="SUPFAM" id="SSF50486">
    <property type="entry name" value="FMT C-terminal domain-like"/>
    <property type="match status" value="1"/>
</dbReference>
<dbReference type="SUPFAM" id="SSF53328">
    <property type="entry name" value="Formyltransferase"/>
    <property type="match status" value="1"/>
</dbReference>
<dbReference type="PROSITE" id="PS00373">
    <property type="entry name" value="GART"/>
    <property type="match status" value="1"/>
</dbReference>
<evidence type="ECO:0000255" key="1">
    <source>
        <dbReference type="HAMAP-Rule" id="MF_00182"/>
    </source>
</evidence>
<keyword id="KW-0648">Protein biosynthesis</keyword>
<keyword id="KW-0808">Transferase</keyword>
<sequence>MTKIIFMGTPDFSTTVLEMLIAEHDVIAVVTQPDRPVGRKRVMTPPPVKKVAMKYDLPVYQPEKLSGSEELEQLLQLDVDLIVTAAFGQLLPESLLALPNLGAINVHASLLPKYRGGAPIHQAIIDGEQETGITIMYMVKKLDAGNIISQQAIKIEENDNVGTMHDKLSVLGADLLKETLPSIIEGTNESVPQDDTQATFASNIRREDERISWNKPGRQVFNQIRGLSPWPVAYTTMDDTNLKIYDAELVETNKINEPGTIIETTKKAIIVATNDNEAVAIKDMQLAGKKRMLAANYLSGAQNTLVGKKLI</sequence>
<proteinExistence type="inferred from homology"/>
<comment type="function">
    <text evidence="1">Attaches a formyl group to the free amino group of methionyl-tRNA(fMet). The formyl group appears to play a dual role in the initiator identity of N-formylmethionyl-tRNA by promoting its recognition by IF2 and preventing the misappropriation of this tRNA by the elongation apparatus.</text>
</comment>
<comment type="catalytic activity">
    <reaction evidence="1">
        <text>L-methionyl-tRNA(fMet) + (6R)-10-formyltetrahydrofolate = N-formyl-L-methionyl-tRNA(fMet) + (6S)-5,6,7,8-tetrahydrofolate + H(+)</text>
        <dbReference type="Rhea" id="RHEA:24380"/>
        <dbReference type="Rhea" id="RHEA-COMP:9952"/>
        <dbReference type="Rhea" id="RHEA-COMP:9953"/>
        <dbReference type="ChEBI" id="CHEBI:15378"/>
        <dbReference type="ChEBI" id="CHEBI:57453"/>
        <dbReference type="ChEBI" id="CHEBI:78530"/>
        <dbReference type="ChEBI" id="CHEBI:78844"/>
        <dbReference type="ChEBI" id="CHEBI:195366"/>
        <dbReference type="EC" id="2.1.2.9"/>
    </reaction>
</comment>
<comment type="similarity">
    <text evidence="1">Belongs to the Fmt family.</text>
</comment>
<gene>
    <name evidence="1" type="primary">fmt</name>
    <name type="ordered locus">NWMN_1126</name>
</gene>
<protein>
    <recommendedName>
        <fullName evidence="1">Methionyl-tRNA formyltransferase</fullName>
        <ecNumber evidence="1">2.1.2.9</ecNumber>
    </recommendedName>
</protein>
<accession>A6QGB6</accession>
<organism>
    <name type="scientific">Staphylococcus aureus (strain Newman)</name>
    <dbReference type="NCBI Taxonomy" id="426430"/>
    <lineage>
        <taxon>Bacteria</taxon>
        <taxon>Bacillati</taxon>
        <taxon>Bacillota</taxon>
        <taxon>Bacilli</taxon>
        <taxon>Bacillales</taxon>
        <taxon>Staphylococcaceae</taxon>
        <taxon>Staphylococcus</taxon>
    </lineage>
</organism>
<reference key="1">
    <citation type="journal article" date="2008" name="J. Bacteriol.">
        <title>Genome sequence of Staphylococcus aureus strain Newman and comparative analysis of staphylococcal genomes: polymorphism and evolution of two major pathogenicity islands.</title>
        <authorList>
            <person name="Baba T."/>
            <person name="Bae T."/>
            <person name="Schneewind O."/>
            <person name="Takeuchi F."/>
            <person name="Hiramatsu K."/>
        </authorList>
    </citation>
    <scope>NUCLEOTIDE SEQUENCE [LARGE SCALE GENOMIC DNA]</scope>
    <source>
        <strain>Newman</strain>
    </source>
</reference>
<feature type="chain" id="PRO_1000071663" description="Methionyl-tRNA formyltransferase">
    <location>
        <begin position="1"/>
        <end position="311"/>
    </location>
</feature>
<feature type="binding site" evidence="1">
    <location>
        <begin position="109"/>
        <end position="112"/>
    </location>
    <ligand>
        <name>(6S)-5,6,7,8-tetrahydrofolate</name>
        <dbReference type="ChEBI" id="CHEBI:57453"/>
    </ligand>
</feature>
<name>FMT_STAAE</name>